<name>CAIA_SALPA</name>
<sequence length="380" mass="42481">MDFNLNDEQELFVAGIRELMASENWEAYFAECDRDSVYPERFVKALADMGIDSLLIPEEHGGLEAGFVTVAAVWMELGRLGAPTYVLYQLPGGFNTFLREGTQEQIDKIMAFRGTGKQMWNSAITEPGAGSDVGSLKTTYTRKNGKVYLNGSKCFITSSAYTPYIVVMARDGASPDKPVYTEWFVDMSKAGIKVNKLEKLGLRMDSCCEITFDDVELDEKDMFGREGNGFNRVKEEFDHERFLVALTNYGTAMCAFEDAARYANQRVQFGEAIGRFQLIQEKFAHMAIKLNSMKNMLLEAAWKADNGTITSGDAAMCKYFCANAAFEVVDTAMQVLGGVGIAGNHRITRFWRDLRVDRVSGGSDEMQILTLGRAVLKQYR</sequence>
<keyword id="KW-0963">Cytoplasm</keyword>
<keyword id="KW-0274">FAD</keyword>
<keyword id="KW-0285">Flavoprotein</keyword>
<keyword id="KW-0560">Oxidoreductase</keyword>
<reference key="1">
    <citation type="journal article" date="2004" name="Nat. Genet.">
        <title>Comparison of genome degradation in Paratyphi A and Typhi, human-restricted serovars of Salmonella enterica that cause typhoid.</title>
        <authorList>
            <person name="McClelland M."/>
            <person name="Sanderson K.E."/>
            <person name="Clifton S.W."/>
            <person name="Latreille P."/>
            <person name="Porwollik S."/>
            <person name="Sabo A."/>
            <person name="Meyer R."/>
            <person name="Bieri T."/>
            <person name="Ozersky P."/>
            <person name="McLellan M."/>
            <person name="Harkins C.R."/>
            <person name="Wang C."/>
            <person name="Nguyen C."/>
            <person name="Berghoff A."/>
            <person name="Elliott G."/>
            <person name="Kohlberg S."/>
            <person name="Strong C."/>
            <person name="Du F."/>
            <person name="Carter J."/>
            <person name="Kremizki C."/>
            <person name="Layman D."/>
            <person name="Leonard S."/>
            <person name="Sun H."/>
            <person name="Fulton L."/>
            <person name="Nash W."/>
            <person name="Miner T."/>
            <person name="Minx P."/>
            <person name="Delehaunty K."/>
            <person name="Fronick C."/>
            <person name="Magrini V."/>
            <person name="Nhan M."/>
            <person name="Warren W."/>
            <person name="Florea L."/>
            <person name="Spieth J."/>
            <person name="Wilson R.K."/>
        </authorList>
    </citation>
    <scope>NUCLEOTIDE SEQUENCE [LARGE SCALE GENOMIC DNA]</scope>
    <source>
        <strain>ATCC 9150 / SARB42</strain>
    </source>
</reference>
<comment type="function">
    <text evidence="1">Catalyzes the reduction of crotonobetainyl-CoA to gamma-butyrobetainyl-CoA.</text>
</comment>
<comment type="catalytic activity">
    <reaction evidence="1">
        <text>4-(trimethylamino)butanoyl-CoA + oxidized [electron-transfer flavoprotein] + H(+) = crotonobetainyl-CoA + reduced [electron-transfer flavoprotein]</text>
        <dbReference type="Rhea" id="RHEA:51584"/>
        <dbReference type="Rhea" id="RHEA-COMP:10685"/>
        <dbReference type="Rhea" id="RHEA-COMP:10686"/>
        <dbReference type="ChEBI" id="CHEBI:15378"/>
        <dbReference type="ChEBI" id="CHEBI:57692"/>
        <dbReference type="ChEBI" id="CHEBI:58307"/>
        <dbReference type="ChEBI" id="CHEBI:60933"/>
        <dbReference type="ChEBI" id="CHEBI:61513"/>
        <dbReference type="EC" id="1.3.8.13"/>
    </reaction>
</comment>
<comment type="cofactor">
    <cofactor evidence="1">
        <name>FAD</name>
        <dbReference type="ChEBI" id="CHEBI:57692"/>
    </cofactor>
</comment>
<comment type="pathway">
    <text evidence="1">Amine and polyamine metabolism; carnitine metabolism.</text>
</comment>
<comment type="subunit">
    <text evidence="1">Homotetramer.</text>
</comment>
<comment type="subcellular location">
    <subcellularLocation>
        <location evidence="1">Cytoplasm</location>
    </subcellularLocation>
</comment>
<comment type="similarity">
    <text evidence="1">Belongs to the acyl-CoA dehydrogenase family.</text>
</comment>
<dbReference type="EC" id="1.3.8.13" evidence="1"/>
<dbReference type="EMBL" id="CP000026">
    <property type="protein sequence ID" value="AAV76108.1"/>
    <property type="molecule type" value="Genomic_DNA"/>
</dbReference>
<dbReference type="RefSeq" id="WP_000347134.1">
    <property type="nucleotide sequence ID" value="NC_006511.1"/>
</dbReference>
<dbReference type="SMR" id="Q5PIN6"/>
<dbReference type="GeneID" id="44979088"/>
<dbReference type="KEGG" id="spt:SPA0074"/>
<dbReference type="HOGENOM" id="CLU_018204_0_2_6"/>
<dbReference type="UniPathway" id="UPA00117"/>
<dbReference type="Proteomes" id="UP000008185">
    <property type="component" value="Chromosome"/>
</dbReference>
<dbReference type="GO" id="GO:0005737">
    <property type="term" value="C:cytoplasm"/>
    <property type="evidence" value="ECO:0007669"/>
    <property type="project" value="UniProtKB-SubCell"/>
</dbReference>
<dbReference type="GO" id="GO:0003995">
    <property type="term" value="F:acyl-CoA dehydrogenase activity"/>
    <property type="evidence" value="ECO:0007669"/>
    <property type="project" value="InterPro"/>
</dbReference>
<dbReference type="GO" id="GO:0050660">
    <property type="term" value="F:flavin adenine dinucleotide binding"/>
    <property type="evidence" value="ECO:0007669"/>
    <property type="project" value="InterPro"/>
</dbReference>
<dbReference type="GO" id="GO:0009437">
    <property type="term" value="P:carnitine metabolic process"/>
    <property type="evidence" value="ECO:0007669"/>
    <property type="project" value="UniProtKB-UniRule"/>
</dbReference>
<dbReference type="CDD" id="cd00567">
    <property type="entry name" value="ACAD"/>
    <property type="match status" value="1"/>
</dbReference>
<dbReference type="FunFam" id="1.20.140.10:FF:000001">
    <property type="entry name" value="Acyl-CoA dehydrogenase"/>
    <property type="match status" value="1"/>
</dbReference>
<dbReference type="FunFam" id="2.40.110.10:FF:000002">
    <property type="entry name" value="Acyl-CoA dehydrogenase fadE12"/>
    <property type="match status" value="1"/>
</dbReference>
<dbReference type="FunFam" id="1.10.540.10:FF:000005">
    <property type="entry name" value="Crotonobetainyl-CoA reductase"/>
    <property type="match status" value="1"/>
</dbReference>
<dbReference type="Gene3D" id="1.10.540.10">
    <property type="entry name" value="Acyl-CoA dehydrogenase/oxidase, N-terminal domain"/>
    <property type="match status" value="1"/>
</dbReference>
<dbReference type="Gene3D" id="2.40.110.10">
    <property type="entry name" value="Butyryl-CoA Dehydrogenase, subunit A, domain 2"/>
    <property type="match status" value="1"/>
</dbReference>
<dbReference type="Gene3D" id="1.20.140.10">
    <property type="entry name" value="Butyryl-CoA Dehydrogenase, subunit A, domain 3"/>
    <property type="match status" value="1"/>
</dbReference>
<dbReference type="HAMAP" id="MF_01052">
    <property type="entry name" value="CaiA"/>
    <property type="match status" value="1"/>
</dbReference>
<dbReference type="InterPro" id="IPR006089">
    <property type="entry name" value="Acyl-CoA_DH_CS"/>
</dbReference>
<dbReference type="InterPro" id="IPR006091">
    <property type="entry name" value="Acyl-CoA_Oxase/DH_mid-dom"/>
</dbReference>
<dbReference type="InterPro" id="IPR046373">
    <property type="entry name" value="Acyl-CoA_Oxase/DH_mid-dom_sf"/>
</dbReference>
<dbReference type="InterPro" id="IPR036250">
    <property type="entry name" value="AcylCo_DH-like_C"/>
</dbReference>
<dbReference type="InterPro" id="IPR009075">
    <property type="entry name" value="AcylCo_DH/oxidase_C"/>
</dbReference>
<dbReference type="InterPro" id="IPR013786">
    <property type="entry name" value="AcylCoA_DH/ox_N"/>
</dbReference>
<dbReference type="InterPro" id="IPR037069">
    <property type="entry name" value="AcylCoA_DH/ox_N_sf"/>
</dbReference>
<dbReference type="InterPro" id="IPR009100">
    <property type="entry name" value="AcylCoA_DH/oxidase_NM_dom_sf"/>
</dbReference>
<dbReference type="InterPro" id="IPR023450">
    <property type="entry name" value="CaiA"/>
</dbReference>
<dbReference type="NCBIfam" id="NF002885">
    <property type="entry name" value="PRK03354.1"/>
    <property type="match status" value="1"/>
</dbReference>
<dbReference type="PANTHER" id="PTHR43884">
    <property type="entry name" value="ACYL-COA DEHYDROGENASE"/>
    <property type="match status" value="1"/>
</dbReference>
<dbReference type="PANTHER" id="PTHR43884:SF12">
    <property type="entry name" value="ISOVALERYL-COA DEHYDROGENASE, MITOCHONDRIAL-RELATED"/>
    <property type="match status" value="1"/>
</dbReference>
<dbReference type="Pfam" id="PF00441">
    <property type="entry name" value="Acyl-CoA_dh_1"/>
    <property type="match status" value="1"/>
</dbReference>
<dbReference type="Pfam" id="PF02770">
    <property type="entry name" value="Acyl-CoA_dh_M"/>
    <property type="match status" value="1"/>
</dbReference>
<dbReference type="Pfam" id="PF02771">
    <property type="entry name" value="Acyl-CoA_dh_N"/>
    <property type="match status" value="1"/>
</dbReference>
<dbReference type="PIRSF" id="PIRSF016578">
    <property type="entry name" value="HsaA"/>
    <property type="match status" value="1"/>
</dbReference>
<dbReference type="SUPFAM" id="SSF47203">
    <property type="entry name" value="Acyl-CoA dehydrogenase C-terminal domain-like"/>
    <property type="match status" value="1"/>
</dbReference>
<dbReference type="SUPFAM" id="SSF56645">
    <property type="entry name" value="Acyl-CoA dehydrogenase NM domain-like"/>
    <property type="match status" value="1"/>
</dbReference>
<dbReference type="PROSITE" id="PS00072">
    <property type="entry name" value="ACYL_COA_DH_1"/>
    <property type="match status" value="1"/>
</dbReference>
<dbReference type="PROSITE" id="PS00073">
    <property type="entry name" value="ACYL_COA_DH_2"/>
    <property type="match status" value="1"/>
</dbReference>
<gene>
    <name evidence="1" type="primary">caiA</name>
    <name type="ordered locus">SPA0074</name>
</gene>
<proteinExistence type="inferred from homology"/>
<organism>
    <name type="scientific">Salmonella paratyphi A (strain ATCC 9150 / SARB42)</name>
    <dbReference type="NCBI Taxonomy" id="295319"/>
    <lineage>
        <taxon>Bacteria</taxon>
        <taxon>Pseudomonadati</taxon>
        <taxon>Pseudomonadota</taxon>
        <taxon>Gammaproteobacteria</taxon>
        <taxon>Enterobacterales</taxon>
        <taxon>Enterobacteriaceae</taxon>
        <taxon>Salmonella</taxon>
    </lineage>
</organism>
<feature type="chain" id="PRO_1000064351" description="Crotonobetainyl-CoA reductase">
    <location>
        <begin position="1"/>
        <end position="380"/>
    </location>
</feature>
<protein>
    <recommendedName>
        <fullName evidence="1">Crotonobetainyl-CoA reductase</fullName>
        <ecNumber evidence="1">1.3.8.13</ecNumber>
    </recommendedName>
    <alternativeName>
        <fullName evidence="1">Crotonobetainyl-CoA dehydrogenase</fullName>
    </alternativeName>
</protein>
<evidence type="ECO:0000255" key="1">
    <source>
        <dbReference type="HAMAP-Rule" id="MF_01052"/>
    </source>
</evidence>
<accession>Q5PIN6</accession>